<gene>
    <name type="primary">tgfb1</name>
</gene>
<reference key="1">
    <citation type="submission" date="1999-03" db="EMBL/GenBank/DDBJ databases">
        <title>Molecular cloning of carp transforming growth factor beta 1.</title>
        <authorList>
            <person name="Yin Z."/>
            <person name="Kuang J."/>
        </authorList>
    </citation>
    <scope>NUCLEOTIDE SEQUENCE [MRNA]</scope>
</reference>
<evidence type="ECO:0000250" key="1">
    <source>
        <dbReference type="UniProtKB" id="P01137"/>
    </source>
</evidence>
<evidence type="ECO:0000250" key="2">
    <source>
        <dbReference type="UniProtKB" id="P04202"/>
    </source>
</evidence>
<evidence type="ECO:0000250" key="3">
    <source>
        <dbReference type="UniProtKB" id="P07200"/>
    </source>
</evidence>
<evidence type="ECO:0000255" key="4"/>
<evidence type="ECO:0000305" key="5"/>
<dbReference type="EMBL" id="AF136947">
    <property type="protein sequence ID" value="AAF22573.1"/>
    <property type="molecule type" value="mRNA"/>
</dbReference>
<dbReference type="SMR" id="Q9PTQ2"/>
<dbReference type="GlyCosmos" id="Q9PTQ2">
    <property type="glycosylation" value="3 sites, No reported glycans"/>
</dbReference>
<dbReference type="Proteomes" id="UP000694384">
    <property type="component" value="Unplaced"/>
</dbReference>
<dbReference type="Proteomes" id="UP000694427">
    <property type="component" value="Unplaced"/>
</dbReference>
<dbReference type="Proteomes" id="UP000694700">
    <property type="component" value="Unplaced"/>
</dbReference>
<dbReference type="Proteomes" id="UP000694701">
    <property type="component" value="Unplaced"/>
</dbReference>
<dbReference type="Proteomes" id="UP001155660">
    <property type="component" value="Unplaced"/>
</dbReference>
<dbReference type="GO" id="GO:0005615">
    <property type="term" value="C:extracellular space"/>
    <property type="evidence" value="ECO:0007669"/>
    <property type="project" value="InterPro"/>
</dbReference>
<dbReference type="GO" id="GO:0005125">
    <property type="term" value="F:cytokine activity"/>
    <property type="evidence" value="ECO:0007669"/>
    <property type="project" value="TreeGrafter"/>
</dbReference>
<dbReference type="GO" id="GO:0008083">
    <property type="term" value="F:growth factor activity"/>
    <property type="evidence" value="ECO:0007669"/>
    <property type="project" value="UniProtKB-KW"/>
</dbReference>
<dbReference type="GO" id="GO:0005160">
    <property type="term" value="F:transforming growth factor beta receptor binding"/>
    <property type="evidence" value="ECO:0007669"/>
    <property type="project" value="InterPro"/>
</dbReference>
<dbReference type="GO" id="GO:0051781">
    <property type="term" value="P:positive regulation of cell division"/>
    <property type="evidence" value="ECO:0007669"/>
    <property type="project" value="UniProtKB-KW"/>
</dbReference>
<dbReference type="GO" id="GO:0014008">
    <property type="term" value="P:positive regulation of microglia differentiation"/>
    <property type="evidence" value="ECO:0000250"/>
    <property type="project" value="UniProtKB"/>
</dbReference>
<dbReference type="GO" id="GO:0042127">
    <property type="term" value="P:regulation of cell population proliferation"/>
    <property type="evidence" value="ECO:0007669"/>
    <property type="project" value="TreeGrafter"/>
</dbReference>
<dbReference type="GO" id="GO:0007179">
    <property type="term" value="P:transforming growth factor beta receptor signaling pathway"/>
    <property type="evidence" value="ECO:0007669"/>
    <property type="project" value="TreeGrafter"/>
</dbReference>
<dbReference type="CDD" id="cd19384">
    <property type="entry name" value="TGF_beta_TGFB1"/>
    <property type="match status" value="1"/>
</dbReference>
<dbReference type="FunFam" id="2.10.90.10:FF:000004">
    <property type="entry name" value="Transforming growth factor beta"/>
    <property type="match status" value="1"/>
</dbReference>
<dbReference type="Gene3D" id="2.60.120.970">
    <property type="match status" value="1"/>
</dbReference>
<dbReference type="Gene3D" id="2.10.90.10">
    <property type="entry name" value="Cystine-knot cytokines"/>
    <property type="match status" value="1"/>
</dbReference>
<dbReference type="InterPro" id="IPR029034">
    <property type="entry name" value="Cystine-knot_cytokine"/>
</dbReference>
<dbReference type="InterPro" id="IPR001839">
    <property type="entry name" value="TGF-b_C"/>
</dbReference>
<dbReference type="InterPro" id="IPR001111">
    <property type="entry name" value="TGF-b_propeptide"/>
</dbReference>
<dbReference type="InterPro" id="IPR016319">
    <property type="entry name" value="TGF-beta"/>
</dbReference>
<dbReference type="InterPro" id="IPR015615">
    <property type="entry name" value="TGF-beta-rel"/>
</dbReference>
<dbReference type="InterPro" id="IPR003939">
    <property type="entry name" value="TGFb1"/>
</dbReference>
<dbReference type="InterPro" id="IPR017948">
    <property type="entry name" value="TGFb_CS"/>
</dbReference>
<dbReference type="PANTHER" id="PTHR11848">
    <property type="entry name" value="TGF-BETA FAMILY"/>
    <property type="match status" value="1"/>
</dbReference>
<dbReference type="PANTHER" id="PTHR11848:SF125">
    <property type="entry name" value="TRANSFORMING GROWTH FACTOR BETA-1 PROPROTEIN"/>
    <property type="match status" value="1"/>
</dbReference>
<dbReference type="Pfam" id="PF00019">
    <property type="entry name" value="TGF_beta"/>
    <property type="match status" value="1"/>
</dbReference>
<dbReference type="Pfam" id="PF00688">
    <property type="entry name" value="TGFb_propeptide"/>
    <property type="match status" value="1"/>
</dbReference>
<dbReference type="PIRSF" id="PIRSF001787">
    <property type="entry name" value="TGF-beta"/>
    <property type="match status" value="1"/>
</dbReference>
<dbReference type="PRINTS" id="PR01423">
    <property type="entry name" value="TGFBETA"/>
</dbReference>
<dbReference type="PRINTS" id="PR01424">
    <property type="entry name" value="TGFBETA1"/>
</dbReference>
<dbReference type="SMART" id="SM00204">
    <property type="entry name" value="TGFB"/>
    <property type="match status" value="1"/>
</dbReference>
<dbReference type="SUPFAM" id="SSF57501">
    <property type="entry name" value="Cystine-knot cytokines"/>
    <property type="match status" value="1"/>
</dbReference>
<dbReference type="PROSITE" id="PS00250">
    <property type="entry name" value="TGF_BETA_1"/>
    <property type="match status" value="1"/>
</dbReference>
<dbReference type="PROSITE" id="PS51362">
    <property type="entry name" value="TGF_BETA_2"/>
    <property type="match status" value="1"/>
</dbReference>
<organism>
    <name type="scientific">Cyprinus carpio</name>
    <name type="common">Common carp</name>
    <dbReference type="NCBI Taxonomy" id="7962"/>
    <lineage>
        <taxon>Eukaryota</taxon>
        <taxon>Metazoa</taxon>
        <taxon>Chordata</taxon>
        <taxon>Craniata</taxon>
        <taxon>Vertebrata</taxon>
        <taxon>Euteleostomi</taxon>
        <taxon>Actinopterygii</taxon>
        <taxon>Neopterygii</taxon>
        <taxon>Teleostei</taxon>
        <taxon>Ostariophysi</taxon>
        <taxon>Cypriniformes</taxon>
        <taxon>Cyprinidae</taxon>
        <taxon>Cyprininae</taxon>
        <taxon>Cyprinus</taxon>
    </lineage>
</organism>
<proteinExistence type="evidence at transcript level"/>
<keyword id="KW-0165">Cleavage on pair of basic residues</keyword>
<keyword id="KW-1015">Disulfide bond</keyword>
<keyword id="KW-0272">Extracellular matrix</keyword>
<keyword id="KW-0325">Glycoprotein</keyword>
<keyword id="KW-0339">Growth factor</keyword>
<keyword id="KW-0497">Mitogen</keyword>
<keyword id="KW-1185">Reference proteome</keyword>
<keyword id="KW-0964">Secreted</keyword>
<keyword id="KW-0732">Signal</keyword>
<feature type="signal peptide" evidence="4">
    <location>
        <begin position="1"/>
        <end position="22"/>
    </location>
</feature>
<feature type="chain" id="PRO_0000445550" description="Latency-associated peptide" evidence="1">
    <location>
        <begin position="23"/>
        <end position="265"/>
    </location>
</feature>
<feature type="chain" id="PRO_0000033779" description="Transforming growth factor beta-1" evidence="1">
    <location>
        <begin position="266"/>
        <end position="376"/>
    </location>
</feature>
<feature type="region of interest" description="Straightjacket domain" evidence="3">
    <location>
        <begin position="23"/>
        <end position="68"/>
    </location>
</feature>
<feature type="region of interest" description="Arm domain" evidence="3">
    <location>
        <begin position="69"/>
        <end position="258"/>
    </location>
</feature>
<feature type="region of interest" description="Bowtie tail" evidence="1">
    <location>
        <begin position="214"/>
        <end position="238"/>
    </location>
</feature>
<feature type="short sequence motif" description="Cell attachment site" evidence="4">
    <location>
        <begin position="230"/>
        <end position="232"/>
    </location>
</feature>
<feature type="glycosylation site" description="N-linked (GlcNAc...) asparagine" evidence="4">
    <location>
        <position position="76"/>
    </location>
</feature>
<feature type="glycosylation site" description="N-linked (GlcNAc...) asparagine" evidence="4">
    <location>
        <position position="125"/>
    </location>
</feature>
<feature type="glycosylation site" description="N-linked (GlcNAc...) asparagine" evidence="4">
    <location>
        <position position="167"/>
    </location>
</feature>
<feature type="disulfide bond" description="Interchain (with C-? in LTBP1 TB3 domain); in inactive form" evidence="3">
    <location>
        <position position="26"/>
    </location>
</feature>
<feature type="disulfide bond" evidence="1">
    <location>
        <begin position="272"/>
        <end position="280"/>
    </location>
</feature>
<feature type="disulfide bond" evidence="1">
    <location>
        <begin position="308"/>
        <end position="373"/>
    </location>
</feature>
<feature type="disulfide bond" evidence="1">
    <location>
        <begin position="312"/>
        <end position="375"/>
    </location>
</feature>
<feature type="disulfide bond" description="Interchain" evidence="1">
    <location>
        <position position="341"/>
    </location>
</feature>
<protein>
    <recommendedName>
        <fullName>Transforming growth factor beta-1 proprotein</fullName>
    </recommendedName>
    <component>
        <recommendedName>
            <fullName>Latency-associated peptide</fullName>
            <shortName>LAP</shortName>
        </recommendedName>
    </component>
    <component>
        <recommendedName>
            <fullName>Transforming growth factor beta-1</fullName>
            <shortName>TGF-beta-1</shortName>
        </recommendedName>
    </component>
</protein>
<sequence length="376" mass="43330">MRVESLLLALQCLLGFVHYSGALSTCSPLDLELIKRKRIEAIRGQILSKLRLSKEPEVDEEKESQNIPAELISVYNSTVELNEEQAAPPEQPKEDPVEEEYYAKEVHKFTIKLMEKNPDKFLWFNITDISQTLGLNRIISQVELRLLITTFPDGSEQRLELYQVIGNKSRYLESRFIPNQRKWLSFDVTQTLKDWLQRSEAEQGFQLKMADNCDPQKTFQLKIPGLVLVRGDTETLAVNMPRPHILVMSLPLDGNNSSKSRRKRQTETDQVCTDKSDGCCVRSLYIDFRKDLGWKWIHEPSGYYANYCTGSCSFVWTSENKYSQVLALYKHHNPGASAQPCRVPQVLNPLPIFYYVGRQHKVEQLSNMIVKTCKCC</sequence>
<name>TGFB1_CYPCA</name>
<comment type="function">
    <text evidence="1">Transforming growth factor beta-1 proprotein: Precursor of the Latency-associated peptide (LAP) and Transforming growth factor beta-1 (TGF-beta-1) chains, which constitute the regulatory and active subunit of TGF-beta-1, respectively.</text>
</comment>
<comment type="function">
    <molecule>Latency-associated peptide</molecule>
    <text evidence="1">Required to maintain the Transforming growth factor beta-1 (TGF-beta-1) chain in a latent state during storage in extracellular matrix. Associates non-covalently with TGF-beta-1 and regulates its activation via interaction with 'milieu molecules', such as LTBP1, LRRC32/GARP and LRRC33/NRROS, that control activation of TGF-beta-1. Interaction with integrins (ITGAV:ITGB6 or ITGAV:ITGB8) results in distortion of the Latency-associated peptide chain and subsequent release of the active TGF-beta-1.</text>
</comment>
<comment type="function">
    <text evidence="1 2">Transforming growth factor beta-1: Multifunctional protein that regulates the growth and differentiation of various cell types and is involved in various processes, such as normal development, immune function, microglia function and responses to neurodegeneration (By similarity). Activation into mature form follows different steps: following cleavage of the proprotein in the Golgi apparatus, Latency-associated peptide (LAP) and Transforming growth factor beta-1 (TGF-beta-1) chains remain non-covalently linked rendering TGF-beta-1 inactive during storage in extracellular matrix. At the same time, LAP chain interacts with 'milieu molecules', such as ltbp1, lrrc32/garp and lrrc33/nrros that control activation of TGF-beta-1 and maintain it in a latent state during storage in extracellular milieus. TGF-beta-1 is released from LAP by integrins (ITGAV:ITGB6 or ITGAV:ITGB8): integrin-binding to LAP stabilizes an alternative conformation of the LAP bowtie tail and results in distortion of the LAP chain and subsequent release of the active TGF-beta-1. Once activated following release of LAP, TGF-beta-1 acts by binding to TGF-beta receptors (tgfbr1 and tgfbr2), which transduce signal (By similarity). While expressed by many cells types, TGF-beta-1 only has a very localized range of action within cell environment thanks to fine regulation of its activation by Latency-associated peptide chain (LAP) and 'milieu molecules'. Plays an important role in bone remodeling: acts as a potent stimulator of osteoblastic bone formation. Can promote either T-helper 17 cells (Th17) or regulatory T-cells (Treg) lineage differentiation in a concentration-dependent manner (By similarity). Can induce epithelial-to-mesenchymal transition (EMT) and cell migration in various cell types (By similarity).</text>
</comment>
<comment type="subunit">
    <text evidence="1">Latency-associated peptide: Homodimer; disulfide-linked. Latency-associated peptide: Interacts with Transforming growth factor beta-1 (TGF-beta-1) chain; interaction is non-covalent and maintains (TGF-beta-1) in a latent state; each Latency-associated peptide (LAP) monomer interacts with TGF-beta-1 in the other monomer. Transforming growth factor beta-1: Homodimer; disulfide-linked. Transforming growth factor beta-1: Interacts with TGF-beta receptors (tgfbr1 and tgfbr2), leading to signal transduction. Interacts with EFEMP2 (By similarity).</text>
</comment>
<comment type="subcellular location">
    <molecule>Latency-associated peptide</molecule>
    <subcellularLocation>
        <location evidence="1">Secreted</location>
        <location evidence="1">Extracellular space</location>
        <location evidence="1">Extracellular matrix</location>
    </subcellularLocation>
</comment>
<comment type="subcellular location">
    <molecule>Transforming growth factor beta-1</molecule>
    <subcellularLocation>
        <location evidence="1">Secreted</location>
    </subcellularLocation>
</comment>
<comment type="domain">
    <molecule>Latency-associated peptide</molecule>
    <text evidence="3">The 'straitjacket' and 'arm' domains encircle the Transforming growth factor beta-1 (TGF-beta-1) monomers and are fastened together by strong bonding between Lys-54 and Tyr-101/Tyr-102.</text>
</comment>
<comment type="domain">
    <molecule>Latency-associated peptide</molecule>
    <text evidence="1">The cell attachment site motif mediates binding to integrins (ITGAV:ITGB6 or ITGAV:ITGB8). The motif locates to a long loop in the arm domain called the bowtie tail. Integrin-binding stabilizes an alternative conformation of the bowtie tail. Activation by integrin requires force application by the actin cytoskeleton, which is resisted by the 'milieu molecules' (such as ltbp1, lrrc32/garp and/or lrrc33/nrros), resulting in distortion of the prodomain and release of the active TGF-beta-1.</text>
</comment>
<comment type="PTM">
    <text evidence="1">Transforming growth factor beta-1 proprotein: The precursor proprotein is cleaved in the Golgi apparatus to form Transforming growth factor beta-1 (TGF-beta-1) and Latency-associated peptide (LAP) chains, which remain non-covalently linked, rendering TGF-beta-1 inactive.</text>
</comment>
<comment type="similarity">
    <text evidence="5">Belongs to the TGF-beta family.</text>
</comment>
<accession>Q9PTQ2</accession>